<reference key="1">
    <citation type="journal article" date="1993" name="Proc. Natl. Acad. Sci. U.S.A.">
        <title>Characterization of a gene encoding a Ca(2+)-ATPase-like protein in the plastid envelope.</title>
        <authorList>
            <person name="Huang L."/>
            <person name="Berkelman T."/>
            <person name="Franklin A.E."/>
            <person name="Hoffman N.E."/>
        </authorList>
    </citation>
    <scope>PRELIMINARY NUCLEOTIDE SEQUENCE [GENOMIC DNA / MRNA]</scope>
    <scope>PARTIAL PROTEIN SEQUENCE</scope>
    <source>
        <strain>cv. Columbia</strain>
    </source>
</reference>
<reference key="2">
    <citation type="journal article" date="1994" name="Proc. Natl. Acad. Sci. U.S.A.">
        <authorList>
            <person name="Huang L."/>
            <person name="Berkelman T."/>
            <person name="Franklin A.E."/>
            <person name="Hoffman N.E."/>
        </authorList>
    </citation>
    <scope>ERRATUM OF PUBMED:8234257</scope>
    <scope>SEQUENCE REVISION</scope>
</reference>
<reference key="3">
    <citation type="journal article" date="2000" name="Nature">
        <title>Sequence and analysis of chromosome 1 of the plant Arabidopsis thaliana.</title>
        <authorList>
            <person name="Theologis A."/>
            <person name="Ecker J.R."/>
            <person name="Palm C.J."/>
            <person name="Federspiel N.A."/>
            <person name="Kaul S."/>
            <person name="White O."/>
            <person name="Alonso J."/>
            <person name="Altafi H."/>
            <person name="Araujo R."/>
            <person name="Bowman C.L."/>
            <person name="Brooks S.Y."/>
            <person name="Buehler E."/>
            <person name="Chan A."/>
            <person name="Chao Q."/>
            <person name="Chen H."/>
            <person name="Cheuk R.F."/>
            <person name="Chin C.W."/>
            <person name="Chung M.K."/>
            <person name="Conn L."/>
            <person name="Conway A.B."/>
            <person name="Conway A.R."/>
            <person name="Creasy T.H."/>
            <person name="Dewar K."/>
            <person name="Dunn P."/>
            <person name="Etgu P."/>
            <person name="Feldblyum T.V."/>
            <person name="Feng J.-D."/>
            <person name="Fong B."/>
            <person name="Fujii C.Y."/>
            <person name="Gill J.E."/>
            <person name="Goldsmith A.D."/>
            <person name="Haas B."/>
            <person name="Hansen N.F."/>
            <person name="Hughes B."/>
            <person name="Huizar L."/>
            <person name="Hunter J.L."/>
            <person name="Jenkins J."/>
            <person name="Johnson-Hopson C."/>
            <person name="Khan S."/>
            <person name="Khaykin E."/>
            <person name="Kim C.J."/>
            <person name="Koo H.L."/>
            <person name="Kremenetskaia I."/>
            <person name="Kurtz D.B."/>
            <person name="Kwan A."/>
            <person name="Lam B."/>
            <person name="Langin-Hooper S."/>
            <person name="Lee A."/>
            <person name="Lee J.M."/>
            <person name="Lenz C.A."/>
            <person name="Li J.H."/>
            <person name="Li Y.-P."/>
            <person name="Lin X."/>
            <person name="Liu S.X."/>
            <person name="Liu Z.A."/>
            <person name="Luros J.S."/>
            <person name="Maiti R."/>
            <person name="Marziali A."/>
            <person name="Militscher J."/>
            <person name="Miranda M."/>
            <person name="Nguyen M."/>
            <person name="Nierman W.C."/>
            <person name="Osborne B.I."/>
            <person name="Pai G."/>
            <person name="Peterson J."/>
            <person name="Pham P.K."/>
            <person name="Rizzo M."/>
            <person name="Rooney T."/>
            <person name="Rowley D."/>
            <person name="Sakano H."/>
            <person name="Salzberg S.L."/>
            <person name="Schwartz J.R."/>
            <person name="Shinn P."/>
            <person name="Southwick A.M."/>
            <person name="Sun H."/>
            <person name="Tallon L.J."/>
            <person name="Tambunga G."/>
            <person name="Toriumi M.J."/>
            <person name="Town C.D."/>
            <person name="Utterback T."/>
            <person name="Van Aken S."/>
            <person name="Vaysberg M."/>
            <person name="Vysotskaia V.S."/>
            <person name="Walker M."/>
            <person name="Wu D."/>
            <person name="Yu G."/>
            <person name="Fraser C.M."/>
            <person name="Venter J.C."/>
            <person name="Davis R.W."/>
        </authorList>
    </citation>
    <scope>NUCLEOTIDE SEQUENCE [LARGE SCALE GENOMIC DNA]</scope>
    <source>
        <strain>cv. Columbia</strain>
    </source>
</reference>
<reference key="4">
    <citation type="journal article" date="2017" name="Plant J.">
        <title>Araport11: a complete reannotation of the Arabidopsis thaliana reference genome.</title>
        <authorList>
            <person name="Cheng C.Y."/>
            <person name="Krishnakumar V."/>
            <person name="Chan A.P."/>
            <person name="Thibaud-Nissen F."/>
            <person name="Schobel S."/>
            <person name="Town C.D."/>
        </authorList>
    </citation>
    <scope>GENOME REANNOTATION</scope>
    <source>
        <strain>cv. Columbia</strain>
    </source>
</reference>
<organism>
    <name type="scientific">Arabidopsis thaliana</name>
    <name type="common">Mouse-ear cress</name>
    <dbReference type="NCBI Taxonomy" id="3702"/>
    <lineage>
        <taxon>Eukaryota</taxon>
        <taxon>Viridiplantae</taxon>
        <taxon>Streptophyta</taxon>
        <taxon>Embryophyta</taxon>
        <taxon>Tracheophyta</taxon>
        <taxon>Spermatophyta</taxon>
        <taxon>Magnoliopsida</taxon>
        <taxon>eudicotyledons</taxon>
        <taxon>Gunneridae</taxon>
        <taxon>Pentapetalae</taxon>
        <taxon>rosids</taxon>
        <taxon>malvids</taxon>
        <taxon>Brassicales</taxon>
        <taxon>Brassicaceae</taxon>
        <taxon>Camelineae</taxon>
        <taxon>Arabidopsis</taxon>
    </lineage>
</organism>
<dbReference type="EC" id="7.2.2.10"/>
<dbReference type="EMBL" id="L08468">
    <property type="protein sequence ID" value="AAD10211.1"/>
    <property type="molecule type" value="mRNA"/>
</dbReference>
<dbReference type="EMBL" id="L08469">
    <property type="protein sequence ID" value="AAD10212.1"/>
    <property type="molecule type" value="Genomic_DNA"/>
</dbReference>
<dbReference type="EMBL" id="D13983">
    <property type="protein sequence ID" value="BAA03090.1"/>
    <property type="status" value="ALT_SEQ"/>
    <property type="molecule type" value="mRNA"/>
</dbReference>
<dbReference type="EMBL" id="D13984">
    <property type="protein sequence ID" value="BAA03091.1"/>
    <property type="status" value="ALT_SEQ"/>
    <property type="molecule type" value="Genomic_DNA"/>
</dbReference>
<dbReference type="EMBL" id="X69940">
    <property type="protein sequence ID" value="CAA49558.1"/>
    <property type="status" value="ALT_SEQ"/>
    <property type="molecule type" value="Genomic_DNA"/>
</dbReference>
<dbReference type="EMBL" id="X69941">
    <property type="protein sequence ID" value="CAA49559.1"/>
    <property type="status" value="ALT_SEQ"/>
    <property type="molecule type" value="mRNA"/>
</dbReference>
<dbReference type="EMBL" id="AC012375">
    <property type="protein sequence ID" value="AAF24958.1"/>
    <property type="status" value="ALT_SEQ"/>
    <property type="molecule type" value="Genomic_DNA"/>
</dbReference>
<dbReference type="EMBL" id="AC079280">
    <property type="protein sequence ID" value="AAG50579.1"/>
    <property type="molecule type" value="Genomic_DNA"/>
</dbReference>
<dbReference type="EMBL" id="CP002684">
    <property type="protein sequence ID" value="AEE30878.1"/>
    <property type="molecule type" value="Genomic_DNA"/>
</dbReference>
<dbReference type="EMBL" id="CP002684">
    <property type="protein sequence ID" value="ANM59134.1"/>
    <property type="molecule type" value="Genomic_DNA"/>
</dbReference>
<dbReference type="PIR" id="D86402">
    <property type="entry name" value="D86402"/>
</dbReference>
<dbReference type="PIR" id="S71168">
    <property type="entry name" value="S71168"/>
</dbReference>
<dbReference type="PIR" id="T51925">
    <property type="entry name" value="T51925"/>
</dbReference>
<dbReference type="PIR" id="T51926">
    <property type="entry name" value="T51926"/>
</dbReference>
<dbReference type="RefSeq" id="NP_001321522.1">
    <molecule id="Q37145-1"/>
    <property type="nucleotide sequence ID" value="NM_001332787.1"/>
</dbReference>
<dbReference type="RefSeq" id="NP_849716.1">
    <molecule id="Q37145-1"/>
    <property type="nucleotide sequence ID" value="NM_179385.2"/>
</dbReference>
<dbReference type="SMR" id="Q37145"/>
<dbReference type="FunCoup" id="Q37145">
    <property type="interactions" value="2785"/>
</dbReference>
<dbReference type="IntAct" id="Q37145">
    <property type="interactions" value="2"/>
</dbReference>
<dbReference type="STRING" id="3702.Q37145"/>
<dbReference type="TCDB" id="3.A.3.2.11">
    <property type="family name" value="the p-type atpase (p-atpase) superfamily"/>
</dbReference>
<dbReference type="iPTMnet" id="Q37145"/>
<dbReference type="SwissPalm" id="Q37145"/>
<dbReference type="PaxDb" id="3702-AT1G27770.1"/>
<dbReference type="ProteomicsDB" id="244363">
    <molecule id="Q37145-1"/>
</dbReference>
<dbReference type="EnsemblPlants" id="AT1G27770.1">
    <molecule id="Q37145-1"/>
    <property type="protein sequence ID" value="AT1G27770.1"/>
    <property type="gene ID" value="AT1G27770"/>
</dbReference>
<dbReference type="EnsemblPlants" id="AT1G27770.4">
    <molecule id="Q37145-1"/>
    <property type="protein sequence ID" value="AT1G27770.4"/>
    <property type="gene ID" value="AT1G27770"/>
</dbReference>
<dbReference type="GeneID" id="839670"/>
<dbReference type="Gramene" id="AT1G27770.1">
    <molecule id="Q37145-1"/>
    <property type="protein sequence ID" value="AT1G27770.1"/>
    <property type="gene ID" value="AT1G27770"/>
</dbReference>
<dbReference type="Gramene" id="AT1G27770.4">
    <molecule id="Q37145-1"/>
    <property type="protein sequence ID" value="AT1G27770.4"/>
    <property type="gene ID" value="AT1G27770"/>
</dbReference>
<dbReference type="KEGG" id="ath:AT1G27770"/>
<dbReference type="Araport" id="AT1G27770"/>
<dbReference type="TAIR" id="AT1G27770">
    <property type="gene designation" value="ACA1"/>
</dbReference>
<dbReference type="eggNOG" id="KOG0204">
    <property type="taxonomic scope" value="Eukaryota"/>
</dbReference>
<dbReference type="HOGENOM" id="CLU_002360_9_2_1"/>
<dbReference type="InParanoid" id="Q37145"/>
<dbReference type="OrthoDB" id="3352408at2759"/>
<dbReference type="PhylomeDB" id="Q37145"/>
<dbReference type="BioCyc" id="ARA:AT1G27770-MONOMER"/>
<dbReference type="BioCyc" id="MetaCyc:MONOMER-14612"/>
<dbReference type="PRO" id="PR:Q37145"/>
<dbReference type="Proteomes" id="UP000006548">
    <property type="component" value="Chromosome 1"/>
</dbReference>
<dbReference type="ExpressionAtlas" id="Q37145">
    <property type="expression patterns" value="baseline and differential"/>
</dbReference>
<dbReference type="GO" id="GO:0009706">
    <property type="term" value="C:chloroplast inner membrane"/>
    <property type="evidence" value="ECO:0000314"/>
    <property type="project" value="TAIR"/>
</dbReference>
<dbReference type="GO" id="GO:0005783">
    <property type="term" value="C:endoplasmic reticulum"/>
    <property type="evidence" value="ECO:0007005"/>
    <property type="project" value="TAIR"/>
</dbReference>
<dbReference type="GO" id="GO:0005634">
    <property type="term" value="C:nucleus"/>
    <property type="evidence" value="ECO:0007005"/>
    <property type="project" value="TAIR"/>
</dbReference>
<dbReference type="GO" id="GO:0005524">
    <property type="term" value="F:ATP binding"/>
    <property type="evidence" value="ECO:0007669"/>
    <property type="project" value="UniProtKB-KW"/>
</dbReference>
<dbReference type="GO" id="GO:0016887">
    <property type="term" value="F:ATP hydrolysis activity"/>
    <property type="evidence" value="ECO:0007669"/>
    <property type="project" value="InterPro"/>
</dbReference>
<dbReference type="GO" id="GO:0005262">
    <property type="term" value="F:calcium channel activity"/>
    <property type="evidence" value="ECO:0000304"/>
    <property type="project" value="TAIR"/>
</dbReference>
<dbReference type="GO" id="GO:0005516">
    <property type="term" value="F:calmodulin binding"/>
    <property type="evidence" value="ECO:0007669"/>
    <property type="project" value="UniProtKB-KW"/>
</dbReference>
<dbReference type="GO" id="GO:0046872">
    <property type="term" value="F:metal ion binding"/>
    <property type="evidence" value="ECO:0007669"/>
    <property type="project" value="UniProtKB-KW"/>
</dbReference>
<dbReference type="GO" id="GO:0005388">
    <property type="term" value="F:P-type calcium transporter activity"/>
    <property type="evidence" value="ECO:0000250"/>
    <property type="project" value="TAIR"/>
</dbReference>
<dbReference type="CDD" id="cd02081">
    <property type="entry name" value="P-type_ATPase_Ca_PMCA-like"/>
    <property type="match status" value="1"/>
</dbReference>
<dbReference type="FunFam" id="1.20.1110.10:FF:000039">
    <property type="entry name" value="Calcium-transporting ATPase"/>
    <property type="match status" value="1"/>
</dbReference>
<dbReference type="FunFam" id="1.20.5.170:FF:000026">
    <property type="entry name" value="Calcium-transporting ATPase"/>
    <property type="match status" value="1"/>
</dbReference>
<dbReference type="FunFam" id="2.70.150.10:FF:000006">
    <property type="entry name" value="Calcium-transporting ATPase"/>
    <property type="match status" value="1"/>
</dbReference>
<dbReference type="FunFam" id="3.40.1110.10:FF:000011">
    <property type="entry name" value="Calcium-transporting ATPase"/>
    <property type="match status" value="1"/>
</dbReference>
<dbReference type="FunFam" id="3.40.50.1000:FF:000011">
    <property type="entry name" value="Calcium-transporting ATPase"/>
    <property type="match status" value="1"/>
</dbReference>
<dbReference type="Gene3D" id="1.20.5.170">
    <property type="match status" value="1"/>
</dbReference>
<dbReference type="Gene3D" id="3.40.1110.10">
    <property type="entry name" value="Calcium-transporting ATPase, cytoplasmic domain N"/>
    <property type="match status" value="1"/>
</dbReference>
<dbReference type="Gene3D" id="2.70.150.10">
    <property type="entry name" value="Calcium-transporting ATPase, cytoplasmic transduction domain A"/>
    <property type="match status" value="1"/>
</dbReference>
<dbReference type="Gene3D" id="1.20.1110.10">
    <property type="entry name" value="Calcium-transporting ATPase, transmembrane domain"/>
    <property type="match status" value="1"/>
</dbReference>
<dbReference type="Gene3D" id="3.40.50.1000">
    <property type="entry name" value="HAD superfamily/HAD-like"/>
    <property type="match status" value="1"/>
</dbReference>
<dbReference type="InterPro" id="IPR006068">
    <property type="entry name" value="ATPase_P-typ_cation-transptr_C"/>
</dbReference>
<dbReference type="InterPro" id="IPR004014">
    <property type="entry name" value="ATPase_P-typ_cation-transptr_N"/>
</dbReference>
<dbReference type="InterPro" id="IPR023299">
    <property type="entry name" value="ATPase_P-typ_cyto_dom_N"/>
</dbReference>
<dbReference type="InterPro" id="IPR018303">
    <property type="entry name" value="ATPase_P-typ_P_site"/>
</dbReference>
<dbReference type="InterPro" id="IPR023298">
    <property type="entry name" value="ATPase_P-typ_TM_dom_sf"/>
</dbReference>
<dbReference type="InterPro" id="IPR008250">
    <property type="entry name" value="ATPase_P-typ_transduc_dom_A_sf"/>
</dbReference>
<dbReference type="InterPro" id="IPR024750">
    <property type="entry name" value="Ca_ATPase_N_dom"/>
</dbReference>
<dbReference type="InterPro" id="IPR036412">
    <property type="entry name" value="HAD-like_sf"/>
</dbReference>
<dbReference type="InterPro" id="IPR023214">
    <property type="entry name" value="HAD_sf"/>
</dbReference>
<dbReference type="InterPro" id="IPR006408">
    <property type="entry name" value="P-type_ATPase_IIB"/>
</dbReference>
<dbReference type="InterPro" id="IPR001757">
    <property type="entry name" value="P_typ_ATPase"/>
</dbReference>
<dbReference type="InterPro" id="IPR044492">
    <property type="entry name" value="P_typ_ATPase_HD_dom"/>
</dbReference>
<dbReference type="NCBIfam" id="TIGR01517">
    <property type="entry name" value="ATPase-IIB_Ca"/>
    <property type="match status" value="1"/>
</dbReference>
<dbReference type="NCBIfam" id="TIGR01494">
    <property type="entry name" value="ATPase_P-type"/>
    <property type="match status" value="2"/>
</dbReference>
<dbReference type="PANTHER" id="PTHR24093:SF467">
    <property type="entry name" value="CALCIUM-TRANSPORTING ATPASE 1"/>
    <property type="match status" value="1"/>
</dbReference>
<dbReference type="PANTHER" id="PTHR24093">
    <property type="entry name" value="CATION TRANSPORTING ATPASE"/>
    <property type="match status" value="1"/>
</dbReference>
<dbReference type="Pfam" id="PF12515">
    <property type="entry name" value="CaATP_NAI"/>
    <property type="match status" value="1"/>
</dbReference>
<dbReference type="Pfam" id="PF13246">
    <property type="entry name" value="Cation_ATPase"/>
    <property type="match status" value="1"/>
</dbReference>
<dbReference type="Pfam" id="PF00689">
    <property type="entry name" value="Cation_ATPase_C"/>
    <property type="match status" value="1"/>
</dbReference>
<dbReference type="Pfam" id="PF00690">
    <property type="entry name" value="Cation_ATPase_N"/>
    <property type="match status" value="1"/>
</dbReference>
<dbReference type="Pfam" id="PF00122">
    <property type="entry name" value="E1-E2_ATPase"/>
    <property type="match status" value="1"/>
</dbReference>
<dbReference type="PRINTS" id="PR00119">
    <property type="entry name" value="CATATPASE"/>
</dbReference>
<dbReference type="PRINTS" id="PR00120">
    <property type="entry name" value="HATPASE"/>
</dbReference>
<dbReference type="SFLD" id="SFLDG00002">
    <property type="entry name" value="C1.7:_P-type_atpase_like"/>
    <property type="match status" value="1"/>
</dbReference>
<dbReference type="SFLD" id="SFLDF00027">
    <property type="entry name" value="p-type_atpase"/>
    <property type="match status" value="1"/>
</dbReference>
<dbReference type="SMART" id="SM00831">
    <property type="entry name" value="Cation_ATPase_N"/>
    <property type="match status" value="1"/>
</dbReference>
<dbReference type="SUPFAM" id="SSF81653">
    <property type="entry name" value="Calcium ATPase, transduction domain A"/>
    <property type="match status" value="1"/>
</dbReference>
<dbReference type="SUPFAM" id="SSF81665">
    <property type="entry name" value="Calcium ATPase, transmembrane domain M"/>
    <property type="match status" value="1"/>
</dbReference>
<dbReference type="SUPFAM" id="SSF56784">
    <property type="entry name" value="HAD-like"/>
    <property type="match status" value="1"/>
</dbReference>
<dbReference type="SUPFAM" id="SSF81660">
    <property type="entry name" value="Metal cation-transporting ATPase, ATP-binding domain N"/>
    <property type="match status" value="1"/>
</dbReference>
<dbReference type="PROSITE" id="PS00154">
    <property type="entry name" value="ATPASE_E1_E2"/>
    <property type="match status" value="1"/>
</dbReference>
<accession>Q37145</accession>
<accession>Q37146</accession>
<accession>Q42571</accession>
<accession>Q42587</accession>
<accession>Q9SFY1</accession>
<protein>
    <recommendedName>
        <fullName>Calcium-transporting ATPase 1</fullName>
        <ecNumber>7.2.2.10</ecNumber>
    </recommendedName>
    <alternativeName>
        <fullName>Ca(2+)-ATPase isoform 1</fullName>
    </alternativeName>
    <alternativeName>
        <fullName>Plastid envelope ATPase 1</fullName>
    </alternativeName>
</protein>
<comment type="function">
    <text>This magnesium-dependent enzyme catalyzes the hydrolysis of ATP coupled with the translocation of calcium from the cytosol out of the cell or into organelles.</text>
</comment>
<comment type="catalytic activity">
    <reaction>
        <text>Ca(2+)(in) + ATP + H2O = Ca(2+)(out) + ADP + phosphate + H(+)</text>
        <dbReference type="Rhea" id="RHEA:18105"/>
        <dbReference type="ChEBI" id="CHEBI:15377"/>
        <dbReference type="ChEBI" id="CHEBI:15378"/>
        <dbReference type="ChEBI" id="CHEBI:29108"/>
        <dbReference type="ChEBI" id="CHEBI:30616"/>
        <dbReference type="ChEBI" id="CHEBI:43474"/>
        <dbReference type="ChEBI" id="CHEBI:456216"/>
        <dbReference type="EC" id="7.2.2.10"/>
    </reaction>
</comment>
<comment type="activity regulation">
    <text evidence="1">Activated by calmodulin.</text>
</comment>
<comment type="subcellular location">
    <subcellularLocation>
        <location evidence="4">Plastid</location>
        <location evidence="4">Chloroplast inner membrane</location>
        <topology evidence="4">Multi-pass membrane protein</topology>
    </subcellularLocation>
</comment>
<comment type="alternative products">
    <event type="alternative splicing"/>
    <isoform>
        <id>Q37145-1</id>
        <name>1</name>
        <sequence type="displayed"/>
    </isoform>
    <text>A number of isoforms are produced. According to EST sequences.</text>
</comment>
<comment type="tissue specificity">
    <text>Expressed at higher levels in roots than in leaves.</text>
</comment>
<comment type="domain">
    <text evidence="1">The N-terminus contains an autoinhibitory calmodulin-binding domain, which binds calmodulin in a calcium-dependent fashion.</text>
</comment>
<comment type="similarity">
    <text evidence="4">Belongs to the cation transport ATPase (P-type) (TC 3.A.3) family. Type IIB subfamily.</text>
</comment>
<comment type="sequence caution" evidence="4">
    <conflict type="erroneous gene model prediction">
        <sequence resource="EMBL-CDS" id="AAF24958"/>
    </conflict>
</comment>
<comment type="sequence caution" evidence="4">
    <conflict type="erroneous gene model prediction">
        <sequence resource="EMBL-CDS" id="CAA49558"/>
    </conflict>
</comment>
<gene>
    <name type="primary">ACA1</name>
    <name type="synonym">PEA1</name>
    <name type="ordered locus">At1g27770</name>
    <name type="ORF">F28L5.1</name>
    <name type="ORF">T22C5.23</name>
</gene>
<evidence type="ECO:0000250" key="1"/>
<evidence type="ECO:0000250" key="2">
    <source>
        <dbReference type="UniProtKB" id="O81108"/>
    </source>
</evidence>
<evidence type="ECO:0000255" key="3"/>
<evidence type="ECO:0000305" key="4"/>
<name>ACA1_ARATH</name>
<proteinExistence type="evidence at protein level"/>
<keyword id="KW-0007">Acetylation</keyword>
<keyword id="KW-0025">Alternative splicing</keyword>
<keyword id="KW-0067">ATP-binding</keyword>
<keyword id="KW-0106">Calcium</keyword>
<keyword id="KW-0109">Calcium transport</keyword>
<keyword id="KW-0112">Calmodulin-binding</keyword>
<keyword id="KW-0150">Chloroplast</keyword>
<keyword id="KW-0903">Direct protein sequencing</keyword>
<keyword id="KW-0406">Ion transport</keyword>
<keyword id="KW-0460">Magnesium</keyword>
<keyword id="KW-0472">Membrane</keyword>
<keyword id="KW-0479">Metal-binding</keyword>
<keyword id="KW-0547">Nucleotide-binding</keyword>
<keyword id="KW-0597">Phosphoprotein</keyword>
<keyword id="KW-0934">Plastid</keyword>
<keyword id="KW-1001">Plastid inner membrane</keyword>
<keyword id="KW-1185">Reference proteome</keyword>
<keyword id="KW-1278">Translocase</keyword>
<keyword id="KW-0812">Transmembrane</keyword>
<keyword id="KW-1133">Transmembrane helix</keyword>
<keyword id="KW-0813">Transport</keyword>
<feature type="chain" id="PRO_0000046410" description="Calcium-transporting ATPase 1">
    <location>
        <begin position="1"/>
        <end position="1020"/>
    </location>
</feature>
<feature type="topological domain" description="Stromal" evidence="3">
    <location>
        <begin position="1"/>
        <end position="162"/>
    </location>
</feature>
<feature type="transmembrane region" description="Helical" evidence="3">
    <location>
        <begin position="163"/>
        <end position="183"/>
    </location>
</feature>
<feature type="topological domain" description="Lumenal" evidence="3">
    <location>
        <begin position="184"/>
        <end position="201"/>
    </location>
</feature>
<feature type="transmembrane region" description="Helical" evidence="3">
    <location>
        <begin position="202"/>
        <end position="222"/>
    </location>
</feature>
<feature type="topological domain" description="Stromal" evidence="3">
    <location>
        <begin position="223"/>
        <end position="350"/>
    </location>
</feature>
<feature type="transmembrane region" description="Helical" evidence="3">
    <location>
        <begin position="351"/>
        <end position="370"/>
    </location>
</feature>
<feature type="topological domain" description="Lumenal" evidence="3">
    <location>
        <begin position="371"/>
        <end position="400"/>
    </location>
</feature>
<feature type="transmembrane region" description="Helical" evidence="3">
    <location>
        <begin position="401"/>
        <end position="418"/>
    </location>
</feature>
<feature type="topological domain" description="Stromal" evidence="3">
    <location>
        <begin position="419"/>
        <end position="813"/>
    </location>
</feature>
<feature type="transmembrane region" description="Helical" evidence="3">
    <location>
        <begin position="814"/>
        <end position="832"/>
    </location>
</feature>
<feature type="topological domain" description="Lumenal" evidence="3">
    <location>
        <begin position="833"/>
        <end position="843"/>
    </location>
</feature>
<feature type="transmembrane region" description="Helical" evidence="3">
    <location>
        <begin position="844"/>
        <end position="864"/>
    </location>
</feature>
<feature type="topological domain" description="Stromal" evidence="3">
    <location>
        <begin position="865"/>
        <end position="884"/>
    </location>
</feature>
<feature type="transmembrane region" description="Helical" evidence="3">
    <location>
        <begin position="885"/>
        <end position="907"/>
    </location>
</feature>
<feature type="topological domain" description="Lumenal" evidence="3">
    <location>
        <begin position="908"/>
        <end position="919"/>
    </location>
</feature>
<feature type="transmembrane region" description="Helical" evidence="3">
    <location>
        <begin position="920"/>
        <end position="941"/>
    </location>
</feature>
<feature type="topological domain" description="Stromal" evidence="3">
    <location>
        <begin position="942"/>
        <end position="959"/>
    </location>
</feature>
<feature type="transmembrane region" description="Helical" evidence="3">
    <location>
        <begin position="960"/>
        <end position="981"/>
    </location>
</feature>
<feature type="topological domain" description="Lumenal" evidence="3">
    <location>
        <begin position="982"/>
        <end position="991"/>
    </location>
</feature>
<feature type="transmembrane region" description="Helical" evidence="3">
    <location>
        <begin position="992"/>
        <end position="1013"/>
    </location>
</feature>
<feature type="topological domain" description="Stromal" evidence="3">
    <location>
        <begin position="1014"/>
        <end position="1020"/>
    </location>
</feature>
<feature type="region of interest" description="Interaction with calmodulin" evidence="1">
    <location>
        <begin position="21"/>
        <end position="32"/>
    </location>
</feature>
<feature type="active site" description="4-aspartylphosphate intermediate" evidence="1">
    <location>
        <position position="456"/>
    </location>
</feature>
<feature type="binding site" evidence="1">
    <location>
        <position position="758"/>
    </location>
    <ligand>
        <name>Mg(2+)</name>
        <dbReference type="ChEBI" id="CHEBI:18420"/>
    </ligand>
</feature>
<feature type="binding site" evidence="1">
    <location>
        <position position="762"/>
    </location>
    <ligand>
        <name>Mg(2+)</name>
        <dbReference type="ChEBI" id="CHEBI:18420"/>
    </ligand>
</feature>
<feature type="modified residue" description="N-acetylmethionine" evidence="2">
    <location>
        <position position="1"/>
    </location>
</feature>
<feature type="modified residue" description="Phosphoserine; by CPK" evidence="2">
    <location>
        <position position="46"/>
    </location>
</feature>
<feature type="sequence conflict" description="In Ref. 1; AAD10211 and 2; BAA03090/CAA49559." evidence="4" ref="1 2">
    <original>P</original>
    <variation>S</variation>
    <location>
        <position position="88"/>
    </location>
</feature>
<feature type="sequence conflict" description="In Ref. 1; AAD10211/AAD10212 and 2; BAA03090/CAA49559." evidence="4" ref="1 2">
    <original>T</original>
    <variation>I</variation>
    <location>
        <position position="801"/>
    </location>
</feature>
<sequence>MESYLNENFGDVKPKNSSDEALQRWRKLCWIVKNPKRRFRFTANLSKRSEAEAIRRSNQEKFRVAVLVSQAALQFINSLKLSSEYTLPEEVRKAGFEICPDELGSIVEGHDLKKLKIHGGTEGLTEKLSTSIASGISTSEDLLSVRKEIYGINQFTESPSRGFWLFVWEALQDTTLMILAACAFVSLIVGILMEGWPIGAHDGLGIVASILLVVFVTATSDYRQSLQFKDLDAEKKKIVVQVTRDKLRQKISIYDLLPGDVVHLGIGDQIPADGLFISGFSVLINESSLTGESEPVSVSVEHPFLLSGTKVQDGSCKMLVTTVGMRTQWGKLMATLSEGGDDETPLQVKLNGVATIIGKIGLFFAVITFAVLVQGLANQKRLDNSHWIWTADELMAMLEYFAVAVTIVVVAVPEGLPLAVTLSLAFAMKKMMNDKALVRNLAACETMGSATTICSDKTGTLTTNHMTVVKACICEQAKEVNGPDAAMKFASGIPESAVKLLLQSIFTNTGGEIVVGKGNKTEILGTPTETALLEFGLSLGGDFQEVRQASNVVKVEPFNSTKKRMGVVIELPERHFRAHCKGASEIVLDSCDKYINKDGEVVPLDEKSTSHLKNIIEEFASEALRTLCLAYFEIGDEFSLEAPIPSGGYTCIGIVGIKDPVRPGVKESVAICKSAGITVRMVTGDNLTTAKAIARECGILTDDGIAIEGPEFREKSDEELLKLIPKLQVMARSSPMDKHTLVRLLRTMFQEVVAVTGDGTNDAPALHEADIGLAMGISGTEVAKESADVIILDDNFSTIVTVAKWGRSVYINIQKFVQFQLTVNVVALIVNFLSACLTGNAPLTAVQLLWVNMIMDTLGALALATEPPQDDLMKRSPVGRKGNFISNVMWRNILGQSLYQLVIIWCLQTKGKTMFGLDGPDSDLTLNTLIFNIFVFCQVFNEISSREMEKIDVFKGILKNYVFVAVLTCTVVFQVIIIELLGTFADTTPLNLGQWLVSIILGFLGMPVAAALKMIPVGSH</sequence>